<keyword id="KW-0067">ATP-binding</keyword>
<keyword id="KW-0547">Nucleotide-binding</keyword>
<keyword id="KW-1185">Reference proteome</keyword>
<keyword id="KW-0808">Transferase</keyword>
<keyword id="KW-0832">Ubl conjugation</keyword>
<keyword id="KW-0833">Ubl conjugation pathway</keyword>
<sequence>MSQDHSVSKRLQSELMNLMMGPSPGISAFPDGDNIFNWIGTIQGAKDTVYEQMEFKMSLKFPTDYPYKPPTVKFETQCFHPNVDNNGNICLDILKDKWSPVYNVRSLLISIQSLLGEPNNESPLNSYAASLWSNQDEYKKVLDKRYQEATSRP</sequence>
<comment type="function">
    <text evidence="2">Catalyzes the covalent attachment of ubiquitin to other proteins. Acts as an essential factor of the anaphase promoting complex/cyclosome (APC/C), a cell cycle-regulated ubiquitin ligase that controls progression through mitosis. Acts by initiating polyubiquitin chains on APC/C substrates, leading to the degradation of APC/C substrates by the proteasome and promoting mitotic exit.</text>
</comment>
<comment type="catalytic activity">
    <reaction evidence="1 2 3">
        <text>S-ubiquitinyl-[E1 ubiquitin-activating enzyme]-L-cysteine + [E2 ubiquitin-conjugating enzyme]-L-cysteine = [E1 ubiquitin-activating enzyme]-L-cysteine + S-ubiquitinyl-[E2 ubiquitin-conjugating enzyme]-L-cysteine.</text>
        <dbReference type="EC" id="2.3.2.23"/>
    </reaction>
</comment>
<comment type="pathway">
    <text evidence="2">Protein modification; protein ubiquitination.</text>
</comment>
<comment type="subunit">
    <text evidence="1">Component of the APC/C complex.</text>
</comment>
<comment type="PTM">
    <text evidence="1">Autoubiquitinated by the APC/C complex, leading to its degradation by the proteasome.</text>
</comment>
<comment type="similarity">
    <text evidence="2">Belongs to the ubiquitin-conjugating enzyme family.</text>
</comment>
<dbReference type="EC" id="2.3.2.23"/>
<dbReference type="EMBL" id="AAFI02000024">
    <property type="protein sequence ID" value="EAL67989.1"/>
    <property type="molecule type" value="Genomic_DNA"/>
</dbReference>
<dbReference type="RefSeq" id="XP_641954.1">
    <property type="nucleotide sequence ID" value="XM_636862.1"/>
</dbReference>
<dbReference type="SMR" id="Q54XS6"/>
<dbReference type="FunCoup" id="Q54XS6">
    <property type="interactions" value="530"/>
</dbReference>
<dbReference type="STRING" id="44689.Q54XS6"/>
<dbReference type="PaxDb" id="44689-DDB0304925"/>
<dbReference type="EnsemblProtists" id="EAL67989">
    <property type="protein sequence ID" value="EAL67989"/>
    <property type="gene ID" value="DDB_G0278775"/>
</dbReference>
<dbReference type="GeneID" id="8621686"/>
<dbReference type="KEGG" id="ddi:DDB_G0278775"/>
<dbReference type="dictyBase" id="DDB_G0278775">
    <property type="gene designation" value="ube2c"/>
</dbReference>
<dbReference type="VEuPathDB" id="AmoebaDB:DDB_G0278775"/>
<dbReference type="eggNOG" id="KOG0421">
    <property type="taxonomic scope" value="Eukaryota"/>
</dbReference>
<dbReference type="HOGENOM" id="CLU_030988_9_0_1"/>
<dbReference type="InParanoid" id="Q54XS6"/>
<dbReference type="OMA" id="PKDNHAV"/>
<dbReference type="PhylomeDB" id="Q54XS6"/>
<dbReference type="Reactome" id="R-DDI-141430">
    <property type="pathway name" value="Inactivation of APC/C via direct inhibition of the APC/C complex"/>
</dbReference>
<dbReference type="Reactome" id="R-DDI-174048">
    <property type="pathway name" value="APC/C:Cdc20 mediated degradation of Cyclin B"/>
</dbReference>
<dbReference type="Reactome" id="R-DDI-174084">
    <property type="pathway name" value="Autodegradation of Cdh1 by Cdh1:APC/C"/>
</dbReference>
<dbReference type="Reactome" id="R-DDI-174154">
    <property type="pathway name" value="APC/C:Cdc20 mediated degradation of Securin"/>
</dbReference>
<dbReference type="Reactome" id="R-DDI-174178">
    <property type="pathway name" value="APC/C:Cdh1 mediated degradation of Cdc20 and other APC/C:Cdh1 targeted proteins in late mitosis/early G1"/>
</dbReference>
<dbReference type="Reactome" id="R-DDI-174184">
    <property type="pathway name" value="Cdc20:Phospho-APC/C mediated degradation of Cyclin A"/>
</dbReference>
<dbReference type="Reactome" id="R-DDI-176407">
    <property type="pathway name" value="Conversion from APC/C:Cdc20 to APC/C:Cdh1 in late anaphase"/>
</dbReference>
<dbReference type="Reactome" id="R-DDI-176408">
    <property type="pathway name" value="Regulation of APC/C activators between G1/S and early anaphase"/>
</dbReference>
<dbReference type="Reactome" id="R-DDI-176409">
    <property type="pathway name" value="APC/C:Cdc20 mediated degradation of mitotic proteins"/>
</dbReference>
<dbReference type="Reactome" id="R-DDI-176412">
    <property type="pathway name" value="Phosphorylation of the APC/C"/>
</dbReference>
<dbReference type="Reactome" id="R-DDI-179409">
    <property type="pathway name" value="APC-Cdc20 mediated degradation of Nek2A"/>
</dbReference>
<dbReference type="Reactome" id="R-DDI-2467813">
    <property type="pathway name" value="Separation of Sister Chromatids"/>
</dbReference>
<dbReference type="Reactome" id="R-DDI-2559582">
    <property type="pathway name" value="Senescence-Associated Secretory Phenotype (SASP)"/>
</dbReference>
<dbReference type="Reactome" id="R-DDI-69017">
    <property type="pathway name" value="CDK-mediated phosphorylation and removal of Cdc6"/>
</dbReference>
<dbReference type="Reactome" id="R-DDI-8866652">
    <property type="pathway name" value="Synthesis of active ubiquitin: roles of E1 and E2 enzymes"/>
</dbReference>
<dbReference type="Reactome" id="R-DDI-983168">
    <property type="pathway name" value="Antigen processing: Ubiquitination &amp; Proteasome degradation"/>
</dbReference>
<dbReference type="UniPathway" id="UPA00143"/>
<dbReference type="PRO" id="PR:Q54XS6"/>
<dbReference type="Proteomes" id="UP000002195">
    <property type="component" value="Chromosome 3"/>
</dbReference>
<dbReference type="GO" id="GO:0005634">
    <property type="term" value="C:nucleus"/>
    <property type="evidence" value="ECO:0000318"/>
    <property type="project" value="GO_Central"/>
</dbReference>
<dbReference type="GO" id="GO:0005524">
    <property type="term" value="F:ATP binding"/>
    <property type="evidence" value="ECO:0007669"/>
    <property type="project" value="UniProtKB-KW"/>
</dbReference>
<dbReference type="GO" id="GO:0061631">
    <property type="term" value="F:ubiquitin conjugating enzyme activity"/>
    <property type="evidence" value="ECO:0000318"/>
    <property type="project" value="GO_Central"/>
</dbReference>
<dbReference type="GO" id="GO:0031145">
    <property type="term" value="P:anaphase-promoting complex-dependent catabolic process"/>
    <property type="evidence" value="ECO:0000318"/>
    <property type="project" value="GO_Central"/>
</dbReference>
<dbReference type="GO" id="GO:0000209">
    <property type="term" value="P:protein polyubiquitination"/>
    <property type="evidence" value="ECO:0000318"/>
    <property type="project" value="GO_Central"/>
</dbReference>
<dbReference type="GO" id="GO:0030071">
    <property type="term" value="P:regulation of mitotic metaphase/anaphase transition"/>
    <property type="evidence" value="ECO:0000318"/>
    <property type="project" value="GO_Central"/>
</dbReference>
<dbReference type="CDD" id="cd23791">
    <property type="entry name" value="UBCc_UBE2C"/>
    <property type="match status" value="1"/>
</dbReference>
<dbReference type="FunFam" id="3.10.110.10:FF:000234">
    <property type="entry name" value="Probable ubiquitin-conjugating enzyme E2 C"/>
    <property type="match status" value="1"/>
</dbReference>
<dbReference type="Gene3D" id="3.10.110.10">
    <property type="entry name" value="Ubiquitin Conjugating Enzyme"/>
    <property type="match status" value="1"/>
</dbReference>
<dbReference type="InterPro" id="IPR050113">
    <property type="entry name" value="Ub_conjugating_enzyme"/>
</dbReference>
<dbReference type="InterPro" id="IPR000608">
    <property type="entry name" value="UBQ-conjugat_E2_core"/>
</dbReference>
<dbReference type="InterPro" id="IPR023313">
    <property type="entry name" value="UBQ-conjugating_AS"/>
</dbReference>
<dbReference type="InterPro" id="IPR016135">
    <property type="entry name" value="UBQ-conjugating_enzyme/RWD"/>
</dbReference>
<dbReference type="PANTHER" id="PTHR24067">
    <property type="entry name" value="UBIQUITIN-CONJUGATING ENZYME E2"/>
    <property type="match status" value="1"/>
</dbReference>
<dbReference type="Pfam" id="PF00179">
    <property type="entry name" value="UQ_con"/>
    <property type="match status" value="1"/>
</dbReference>
<dbReference type="SMART" id="SM00212">
    <property type="entry name" value="UBCc"/>
    <property type="match status" value="1"/>
</dbReference>
<dbReference type="SUPFAM" id="SSF54495">
    <property type="entry name" value="UBC-like"/>
    <property type="match status" value="1"/>
</dbReference>
<dbReference type="PROSITE" id="PS00183">
    <property type="entry name" value="UBC_1"/>
    <property type="match status" value="1"/>
</dbReference>
<dbReference type="PROSITE" id="PS50127">
    <property type="entry name" value="UBC_2"/>
    <property type="match status" value="1"/>
</dbReference>
<proteinExistence type="inferred from homology"/>
<protein>
    <recommendedName>
        <fullName>Probable ubiquitin-conjugating enzyme E2 C</fullName>
        <ecNumber>2.3.2.23</ecNumber>
    </recommendedName>
    <alternativeName>
        <fullName>E2 ubiquitin-conjugating enzyme C</fullName>
    </alternativeName>
    <alternativeName>
        <fullName>Ubiquitin carrier protein C</fullName>
    </alternativeName>
    <alternativeName>
        <fullName>Ubiquitin-protein ligase C</fullName>
    </alternativeName>
</protein>
<organism>
    <name type="scientific">Dictyostelium discoideum</name>
    <name type="common">Social amoeba</name>
    <dbReference type="NCBI Taxonomy" id="44689"/>
    <lineage>
        <taxon>Eukaryota</taxon>
        <taxon>Amoebozoa</taxon>
        <taxon>Evosea</taxon>
        <taxon>Eumycetozoa</taxon>
        <taxon>Dictyostelia</taxon>
        <taxon>Dictyosteliales</taxon>
        <taxon>Dictyosteliaceae</taxon>
        <taxon>Dictyostelium</taxon>
    </lineage>
</organism>
<feature type="chain" id="PRO_0000328509" description="Probable ubiquitin-conjugating enzyme E2 C">
    <location>
        <begin position="1"/>
        <end position="153"/>
    </location>
</feature>
<feature type="domain" description="UBC core" evidence="2">
    <location>
        <begin position="6"/>
        <end position="153"/>
    </location>
</feature>
<feature type="active site" description="Glycyl thioester intermediate" evidence="2 3">
    <location>
        <position position="90"/>
    </location>
</feature>
<accession>Q54XS6</accession>
<evidence type="ECO:0000250" key="1">
    <source>
        <dbReference type="UniProtKB" id="O00762"/>
    </source>
</evidence>
<evidence type="ECO:0000255" key="2">
    <source>
        <dbReference type="PROSITE-ProRule" id="PRU00388"/>
    </source>
</evidence>
<evidence type="ECO:0000255" key="3">
    <source>
        <dbReference type="PROSITE-ProRule" id="PRU10133"/>
    </source>
</evidence>
<reference key="1">
    <citation type="journal article" date="2005" name="Nature">
        <title>The genome of the social amoeba Dictyostelium discoideum.</title>
        <authorList>
            <person name="Eichinger L."/>
            <person name="Pachebat J.A."/>
            <person name="Gloeckner G."/>
            <person name="Rajandream M.A."/>
            <person name="Sucgang R."/>
            <person name="Berriman M."/>
            <person name="Song J."/>
            <person name="Olsen R."/>
            <person name="Szafranski K."/>
            <person name="Xu Q."/>
            <person name="Tunggal B."/>
            <person name="Kummerfeld S."/>
            <person name="Madera M."/>
            <person name="Konfortov B.A."/>
            <person name="Rivero F."/>
            <person name="Bankier A.T."/>
            <person name="Lehmann R."/>
            <person name="Hamlin N."/>
            <person name="Davies R."/>
            <person name="Gaudet P."/>
            <person name="Fey P."/>
            <person name="Pilcher K."/>
            <person name="Chen G."/>
            <person name="Saunders D."/>
            <person name="Sodergren E.J."/>
            <person name="Davis P."/>
            <person name="Kerhornou A."/>
            <person name="Nie X."/>
            <person name="Hall N."/>
            <person name="Anjard C."/>
            <person name="Hemphill L."/>
            <person name="Bason N."/>
            <person name="Farbrother P."/>
            <person name="Desany B."/>
            <person name="Just E."/>
            <person name="Morio T."/>
            <person name="Rost R."/>
            <person name="Churcher C.M."/>
            <person name="Cooper J."/>
            <person name="Haydock S."/>
            <person name="van Driessche N."/>
            <person name="Cronin A."/>
            <person name="Goodhead I."/>
            <person name="Muzny D.M."/>
            <person name="Mourier T."/>
            <person name="Pain A."/>
            <person name="Lu M."/>
            <person name="Harper D."/>
            <person name="Lindsay R."/>
            <person name="Hauser H."/>
            <person name="James K.D."/>
            <person name="Quiles M."/>
            <person name="Madan Babu M."/>
            <person name="Saito T."/>
            <person name="Buchrieser C."/>
            <person name="Wardroper A."/>
            <person name="Felder M."/>
            <person name="Thangavelu M."/>
            <person name="Johnson D."/>
            <person name="Knights A."/>
            <person name="Loulseged H."/>
            <person name="Mungall K.L."/>
            <person name="Oliver K."/>
            <person name="Price C."/>
            <person name="Quail M.A."/>
            <person name="Urushihara H."/>
            <person name="Hernandez J."/>
            <person name="Rabbinowitsch E."/>
            <person name="Steffen D."/>
            <person name="Sanders M."/>
            <person name="Ma J."/>
            <person name="Kohara Y."/>
            <person name="Sharp S."/>
            <person name="Simmonds M.N."/>
            <person name="Spiegler S."/>
            <person name="Tivey A."/>
            <person name="Sugano S."/>
            <person name="White B."/>
            <person name="Walker D."/>
            <person name="Woodward J.R."/>
            <person name="Winckler T."/>
            <person name="Tanaka Y."/>
            <person name="Shaulsky G."/>
            <person name="Schleicher M."/>
            <person name="Weinstock G.M."/>
            <person name="Rosenthal A."/>
            <person name="Cox E.C."/>
            <person name="Chisholm R.L."/>
            <person name="Gibbs R.A."/>
            <person name="Loomis W.F."/>
            <person name="Platzer M."/>
            <person name="Kay R.R."/>
            <person name="Williams J.G."/>
            <person name="Dear P.H."/>
            <person name="Noegel A.A."/>
            <person name="Barrell B.G."/>
            <person name="Kuspa A."/>
        </authorList>
    </citation>
    <scope>NUCLEOTIDE SEQUENCE [LARGE SCALE GENOMIC DNA]</scope>
    <source>
        <strain>AX4</strain>
    </source>
</reference>
<name>UBE2C_DICDI</name>
<gene>
    <name type="primary">ube2c</name>
    <name type="synonym">ubch10</name>
    <name type="ORF">DDB_G0278775</name>
</gene>